<protein>
    <recommendedName>
        <fullName evidence="1">Flagellar hook-basal body complex protein FliE</fullName>
    </recommendedName>
</protein>
<organism>
    <name type="scientific">Escherichia coli (strain 55989 / EAEC)</name>
    <dbReference type="NCBI Taxonomy" id="585055"/>
    <lineage>
        <taxon>Bacteria</taxon>
        <taxon>Pseudomonadati</taxon>
        <taxon>Pseudomonadota</taxon>
        <taxon>Gammaproteobacteria</taxon>
        <taxon>Enterobacterales</taxon>
        <taxon>Enterobacteriaceae</taxon>
        <taxon>Escherichia</taxon>
    </lineage>
</organism>
<accession>B7L8U9</accession>
<gene>
    <name evidence="1" type="primary">fliE</name>
    <name type="ordered locus">EC55989_2157</name>
</gene>
<feature type="chain" id="PRO_1000148050" description="Flagellar hook-basal body complex protein FliE">
    <location>
        <begin position="1"/>
        <end position="104"/>
    </location>
</feature>
<keyword id="KW-0975">Bacterial flagellum</keyword>
<keyword id="KW-1185">Reference proteome</keyword>
<name>FLIE_ECO55</name>
<sequence>MSAIQGIEGVISQLQTTAMSARAQESLPQPTISFAGQLHAALDRISDTQTAARTQAEKFTLGEPGVALNDVMTDMQKASVSMQMGIQVRNKLVAAYQEVMSMQV</sequence>
<comment type="subcellular location">
    <subcellularLocation>
        <location evidence="1">Bacterial flagellum basal body</location>
    </subcellularLocation>
</comment>
<comment type="similarity">
    <text evidence="1">Belongs to the FliE family.</text>
</comment>
<proteinExistence type="inferred from homology"/>
<reference key="1">
    <citation type="journal article" date="2009" name="PLoS Genet.">
        <title>Organised genome dynamics in the Escherichia coli species results in highly diverse adaptive paths.</title>
        <authorList>
            <person name="Touchon M."/>
            <person name="Hoede C."/>
            <person name="Tenaillon O."/>
            <person name="Barbe V."/>
            <person name="Baeriswyl S."/>
            <person name="Bidet P."/>
            <person name="Bingen E."/>
            <person name="Bonacorsi S."/>
            <person name="Bouchier C."/>
            <person name="Bouvet O."/>
            <person name="Calteau A."/>
            <person name="Chiapello H."/>
            <person name="Clermont O."/>
            <person name="Cruveiller S."/>
            <person name="Danchin A."/>
            <person name="Diard M."/>
            <person name="Dossat C."/>
            <person name="Karoui M.E."/>
            <person name="Frapy E."/>
            <person name="Garry L."/>
            <person name="Ghigo J.M."/>
            <person name="Gilles A.M."/>
            <person name="Johnson J."/>
            <person name="Le Bouguenec C."/>
            <person name="Lescat M."/>
            <person name="Mangenot S."/>
            <person name="Martinez-Jehanne V."/>
            <person name="Matic I."/>
            <person name="Nassif X."/>
            <person name="Oztas S."/>
            <person name="Petit M.A."/>
            <person name="Pichon C."/>
            <person name="Rouy Z."/>
            <person name="Ruf C.S."/>
            <person name="Schneider D."/>
            <person name="Tourret J."/>
            <person name="Vacherie B."/>
            <person name="Vallenet D."/>
            <person name="Medigue C."/>
            <person name="Rocha E.P.C."/>
            <person name="Denamur E."/>
        </authorList>
    </citation>
    <scope>NUCLEOTIDE SEQUENCE [LARGE SCALE GENOMIC DNA]</scope>
    <source>
        <strain>55989 / EAEC</strain>
    </source>
</reference>
<dbReference type="EMBL" id="CU928145">
    <property type="protein sequence ID" value="CAU98031.1"/>
    <property type="molecule type" value="Genomic_DNA"/>
</dbReference>
<dbReference type="RefSeq" id="WP_001301376.1">
    <property type="nucleotide sequence ID" value="NC_011748.1"/>
</dbReference>
<dbReference type="SMR" id="B7L8U9"/>
<dbReference type="KEGG" id="eck:EC55989_2157"/>
<dbReference type="HOGENOM" id="CLU_147249_0_2_6"/>
<dbReference type="Proteomes" id="UP000000746">
    <property type="component" value="Chromosome"/>
</dbReference>
<dbReference type="GO" id="GO:0009425">
    <property type="term" value="C:bacterial-type flagellum basal body"/>
    <property type="evidence" value="ECO:0007669"/>
    <property type="project" value="UniProtKB-SubCell"/>
</dbReference>
<dbReference type="GO" id="GO:0003774">
    <property type="term" value="F:cytoskeletal motor activity"/>
    <property type="evidence" value="ECO:0007669"/>
    <property type="project" value="InterPro"/>
</dbReference>
<dbReference type="GO" id="GO:0005198">
    <property type="term" value="F:structural molecule activity"/>
    <property type="evidence" value="ECO:0007669"/>
    <property type="project" value="InterPro"/>
</dbReference>
<dbReference type="GO" id="GO:0071973">
    <property type="term" value="P:bacterial-type flagellum-dependent cell motility"/>
    <property type="evidence" value="ECO:0007669"/>
    <property type="project" value="InterPro"/>
</dbReference>
<dbReference type="HAMAP" id="MF_00724">
    <property type="entry name" value="FliE"/>
    <property type="match status" value="1"/>
</dbReference>
<dbReference type="InterPro" id="IPR001624">
    <property type="entry name" value="FliE"/>
</dbReference>
<dbReference type="NCBIfam" id="TIGR00205">
    <property type="entry name" value="fliE"/>
    <property type="match status" value="1"/>
</dbReference>
<dbReference type="PANTHER" id="PTHR34653">
    <property type="match status" value="1"/>
</dbReference>
<dbReference type="PANTHER" id="PTHR34653:SF1">
    <property type="entry name" value="FLAGELLAR HOOK-BASAL BODY COMPLEX PROTEIN FLIE"/>
    <property type="match status" value="1"/>
</dbReference>
<dbReference type="Pfam" id="PF02049">
    <property type="entry name" value="FliE"/>
    <property type="match status" value="1"/>
</dbReference>
<dbReference type="PRINTS" id="PR01006">
    <property type="entry name" value="FLGHOOKFLIE"/>
</dbReference>
<evidence type="ECO:0000255" key="1">
    <source>
        <dbReference type="HAMAP-Rule" id="MF_00724"/>
    </source>
</evidence>